<evidence type="ECO:0000250" key="1">
    <source>
        <dbReference type="UniProtKB" id="P00403"/>
    </source>
</evidence>
<evidence type="ECO:0000250" key="2">
    <source>
        <dbReference type="UniProtKB" id="P00410"/>
    </source>
</evidence>
<evidence type="ECO:0000250" key="3">
    <source>
        <dbReference type="UniProtKB" id="P68530"/>
    </source>
</evidence>
<evidence type="ECO:0000305" key="4"/>
<geneLocation type="mitochondrion"/>
<proteinExistence type="inferred from homology"/>
<organism>
    <name type="scientific">Atractosteus spatula</name>
    <name type="common">Alligator gar</name>
    <name type="synonym">Lepisosteus spatula</name>
    <dbReference type="NCBI Taxonomy" id="7917"/>
    <lineage>
        <taxon>Eukaryota</taxon>
        <taxon>Metazoa</taxon>
        <taxon>Chordata</taxon>
        <taxon>Craniata</taxon>
        <taxon>Vertebrata</taxon>
        <taxon>Euteleostomi</taxon>
        <taxon>Actinopterygii</taxon>
        <taxon>Neopterygii</taxon>
        <taxon>Holostei</taxon>
        <taxon>Semionotiformes</taxon>
        <taxon>Lepisosteidae</taxon>
        <taxon>Atractosteus</taxon>
    </lineage>
</organism>
<reference key="1">
    <citation type="journal article" date="1991" name="Mol. Biol. Evol.">
        <title>Phylogenetic relationships of neopterygian fishes, inferred from mitochondrial DNA sequences.</title>
        <authorList>
            <person name="Normark B.B."/>
            <person name="McCune A.R."/>
            <person name="Harrison R.G."/>
        </authorList>
    </citation>
    <scope>NUCLEOTIDE SEQUENCE [GENOMIC DNA]</scope>
</reference>
<name>COX2_ATRSP</name>
<accession>P29656</accession>
<feature type="chain" id="PRO_0000183620" description="Cytochrome c oxidase subunit 2">
    <location>
        <begin position="1"/>
        <end position="72" status="greater than"/>
    </location>
</feature>
<feature type="topological domain" description="Mitochondrial intermembrane" evidence="3">
    <location>
        <begin position="1"/>
        <end position="14"/>
    </location>
</feature>
<feature type="transmembrane region" description="Helical; Name=I" evidence="3">
    <location>
        <begin position="15"/>
        <end position="45"/>
    </location>
</feature>
<feature type="topological domain" description="Mitochondrial matrix" evidence="3">
    <location>
        <begin position="46"/>
        <end position="72" status="greater than"/>
    </location>
</feature>
<feature type="non-terminal residue">
    <location>
        <position position="72"/>
    </location>
</feature>
<sequence>MAHPSQLGFQDAASPVMEELLHFHDHALMIVFLISTLVLYIIVAMVSTKLTNKHILDSQEVEIVWTILPAVI</sequence>
<keyword id="KW-0186">Copper</keyword>
<keyword id="KW-0249">Electron transport</keyword>
<keyword id="KW-0472">Membrane</keyword>
<keyword id="KW-0496">Mitochondrion</keyword>
<keyword id="KW-0999">Mitochondrion inner membrane</keyword>
<keyword id="KW-0679">Respiratory chain</keyword>
<keyword id="KW-1278">Translocase</keyword>
<keyword id="KW-0812">Transmembrane</keyword>
<keyword id="KW-1133">Transmembrane helix</keyword>
<keyword id="KW-0813">Transport</keyword>
<gene>
    <name type="primary">mt-co2</name>
    <name type="synonym">coii</name>
    <name type="synonym">coxii</name>
    <name type="synonym">mtco2</name>
</gene>
<protein>
    <recommendedName>
        <fullName>Cytochrome c oxidase subunit 2</fullName>
        <ecNumber>7.1.1.9</ecNumber>
    </recommendedName>
    <alternativeName>
        <fullName>Cytochrome c oxidase polypeptide II</fullName>
    </alternativeName>
</protein>
<dbReference type="EC" id="7.1.1.9"/>
<dbReference type="EMBL" id="M64889">
    <property type="protein sequence ID" value="AAB01455.1"/>
    <property type="status" value="ALT_SEQ"/>
    <property type="molecule type" value="Genomic_DNA"/>
</dbReference>
<dbReference type="SMR" id="P29656"/>
<dbReference type="GO" id="GO:0005743">
    <property type="term" value="C:mitochondrial inner membrane"/>
    <property type="evidence" value="ECO:0007669"/>
    <property type="project" value="UniProtKB-SubCell"/>
</dbReference>
<dbReference type="GO" id="GO:0045277">
    <property type="term" value="C:respiratory chain complex IV"/>
    <property type="evidence" value="ECO:0000250"/>
    <property type="project" value="UniProtKB"/>
</dbReference>
<dbReference type="GO" id="GO:0004129">
    <property type="term" value="F:cytochrome-c oxidase activity"/>
    <property type="evidence" value="ECO:0007669"/>
    <property type="project" value="UniProtKB-EC"/>
</dbReference>
<dbReference type="GO" id="GO:0042773">
    <property type="term" value="P:ATP synthesis coupled electron transport"/>
    <property type="evidence" value="ECO:0007669"/>
    <property type="project" value="TreeGrafter"/>
</dbReference>
<dbReference type="FunFam" id="1.10.287.90:FF:000001">
    <property type="entry name" value="Cytochrome c oxidase subunit 2"/>
    <property type="match status" value="1"/>
</dbReference>
<dbReference type="Gene3D" id="1.10.287.90">
    <property type="match status" value="1"/>
</dbReference>
<dbReference type="InterPro" id="IPR045187">
    <property type="entry name" value="CcO_II"/>
</dbReference>
<dbReference type="InterPro" id="IPR011759">
    <property type="entry name" value="Cyt_c_oxidase_su2_TM_dom"/>
</dbReference>
<dbReference type="InterPro" id="IPR036257">
    <property type="entry name" value="Cyt_c_oxidase_su2_TM_sf"/>
</dbReference>
<dbReference type="PANTHER" id="PTHR22888:SF9">
    <property type="entry name" value="CYTOCHROME C OXIDASE SUBUNIT 2"/>
    <property type="match status" value="1"/>
</dbReference>
<dbReference type="PANTHER" id="PTHR22888">
    <property type="entry name" value="CYTOCHROME C OXIDASE, SUBUNIT II"/>
    <property type="match status" value="1"/>
</dbReference>
<dbReference type="Pfam" id="PF02790">
    <property type="entry name" value="COX2_TM"/>
    <property type="match status" value="1"/>
</dbReference>
<dbReference type="SUPFAM" id="SSF81464">
    <property type="entry name" value="Cytochrome c oxidase subunit II-like, transmembrane region"/>
    <property type="match status" value="1"/>
</dbReference>
<dbReference type="PROSITE" id="PS50999">
    <property type="entry name" value="COX2_TM"/>
    <property type="match status" value="1"/>
</dbReference>
<comment type="function">
    <text evidence="2">Component of the cytochrome c oxidase, the last enzyme in the mitochondrial electron transport chain which drives oxidative phosphorylation. The respiratory chain contains 3 multisubunit complexes succinate dehydrogenase (complex II, CII), ubiquinol-cytochrome c oxidoreductase (cytochrome b-c1 complex, complex III, CIII) and cytochrome c oxidase (complex IV, CIV), that cooperate to transfer electrons derived from NADH and succinate to molecular oxygen, creating an electrochemical gradient over the inner membrane that drives transmembrane transport and the ATP synthase. Cytochrome c oxidase is the component of the respiratory chain that catalyzes the reduction of oxygen to water. Electrons originating from reduced cytochrome c in the intermembrane space (IMS) are transferred via the dinuclear copper A center (CU(A)) of subunit 2 and heme A of subunit 1 to the active site in subunit 1, a binuclear center (BNC) formed by heme A3 and copper B (CU(B)). The BNC reduces molecular oxygen to 2 water molecules using 4 electrons from cytochrome c in the IMS and 4 protons from the mitochondrial matrix.</text>
</comment>
<comment type="catalytic activity">
    <reaction evidence="2">
        <text>4 Fe(II)-[cytochrome c] + O2 + 8 H(+)(in) = 4 Fe(III)-[cytochrome c] + 2 H2O + 4 H(+)(out)</text>
        <dbReference type="Rhea" id="RHEA:11436"/>
        <dbReference type="Rhea" id="RHEA-COMP:10350"/>
        <dbReference type="Rhea" id="RHEA-COMP:14399"/>
        <dbReference type="ChEBI" id="CHEBI:15377"/>
        <dbReference type="ChEBI" id="CHEBI:15378"/>
        <dbReference type="ChEBI" id="CHEBI:15379"/>
        <dbReference type="ChEBI" id="CHEBI:29033"/>
        <dbReference type="ChEBI" id="CHEBI:29034"/>
        <dbReference type="EC" id="7.1.1.9"/>
    </reaction>
    <physiologicalReaction direction="left-to-right" evidence="2">
        <dbReference type="Rhea" id="RHEA:11437"/>
    </physiologicalReaction>
</comment>
<comment type="cofactor">
    <cofactor evidence="3">
        <name>Cu cation</name>
        <dbReference type="ChEBI" id="CHEBI:23378"/>
    </cofactor>
    <text evidence="3">Binds a dinuclear copper A center per subunit.</text>
</comment>
<comment type="subunit">
    <text evidence="1 3">Component of the cytochrome c oxidase (complex IV, CIV), a multisubunit enzyme composed of 14 subunits. The complex is composed of a catalytic core of 3 subunits MT-CO1, MT-CO2 and MT-CO3, encoded in the mitochondrial DNA, and 11 supernumerary subunits COX4I, COX5A, COX5B, COX6A, COX6B, COX6C, COX7A, COX7B, COX7C, COX8 and NDUFA4, which are encoded in the nuclear genome. The complex exists as a monomer or a dimer and forms supercomplexes (SCs) in the inner mitochondrial membrane with NADH-ubiquinone oxidoreductase (complex I, CI) and ubiquinol-cytochrome c oxidoreductase (cytochrome b-c1 complex, complex III, CIII), resulting in different assemblies (supercomplex SCI(1)III(2)IV(1) and megacomplex MCI(2)III(2)IV(2)) (By similarity). Found in a complex with TMEM177, COA6, COX18, COX20, SCO1 and SCO2. Interacts with TMEM177 in a COX20-dependent manner. Interacts with COX20. Interacts with COX16 (By similarity).</text>
</comment>
<comment type="subcellular location">
    <subcellularLocation>
        <location evidence="3">Mitochondrion inner membrane</location>
        <topology evidence="3">Multi-pass membrane protein</topology>
    </subcellularLocation>
</comment>
<comment type="similarity">
    <text evidence="4">Belongs to the cytochrome c oxidase subunit 2 family.</text>
</comment>